<feature type="peptide" id="PRO_0000043977" description="Erythromycin resistance leader peptide">
    <location>
        <begin position="1"/>
        <end position="14"/>
    </location>
</feature>
<organism>
    <name type="scientific">Bacillus licheniformis</name>
    <dbReference type="NCBI Taxonomy" id="1402"/>
    <lineage>
        <taxon>Bacteria</taxon>
        <taxon>Bacillati</taxon>
        <taxon>Bacillota</taxon>
        <taxon>Bacilli</taxon>
        <taxon>Bacillales</taxon>
        <taxon>Bacillaceae</taxon>
        <taxon>Bacillus</taxon>
    </lineage>
</organism>
<accession>P62188</accession>
<accession>Q04303</accession>
<sequence>MTHSMRLRFPTLNQ</sequence>
<proteinExistence type="predicted"/>
<comment type="function">
    <text>This peptide is involved in the control mechanism of the synthesis of the macrolide-lincosamide-streptogramin B resistance protein. It acts as a transcriptional attenuator.</text>
</comment>
<reference key="1">
    <citation type="journal article" date="1984" name="Mol. Gen. Genet.">
        <title>DNA sequence and regulation of ermD, a macrolide-lincosamide-streptogramin B resistance element from Bacillus licheniformis.</title>
        <authorList>
            <person name="Gryczan T."/>
            <person name="Israeli-Reches M."/>
            <person name="del Bue M."/>
            <person name="Dubnau D."/>
        </authorList>
    </citation>
    <scope>NUCLEOTIDE SEQUENCE [GENOMIC DNA]</scope>
</reference>
<reference key="2">
    <citation type="journal article" date="1991" name="J. Bacteriol.">
        <title>Transcriptional attenuation control of ermK, a macrolide-lincosamide-streptogramin B resistance determinant from Bacillus licheniformis.</title>
        <authorList>
            <person name="Kwak J.-H."/>
            <person name="Choi E.-C."/>
            <person name="Weisblum B."/>
        </authorList>
    </citation>
    <scope>NUCLEOTIDE SEQUENCE [GENOMIC DNA]</scope>
    <source>
        <strain>EMR-1</strain>
    </source>
</reference>
<dbReference type="EMBL" id="M29832">
    <property type="protein sequence ID" value="AAA22598.1"/>
    <property type="molecule type" value="Genomic_DNA"/>
</dbReference>
<dbReference type="PIR" id="A42473">
    <property type="entry name" value="A42473"/>
</dbReference>
<dbReference type="RefSeq" id="WP_105980607.1">
    <property type="nucleotide sequence ID" value="NZ_BOQU01000004.1"/>
</dbReference>
<dbReference type="GeneID" id="96992503"/>
<dbReference type="GO" id="GO:0046677">
    <property type="term" value="P:response to antibiotic"/>
    <property type="evidence" value="ECO:0007669"/>
    <property type="project" value="UniProtKB-KW"/>
</dbReference>
<dbReference type="InterPro" id="IPR012559">
    <property type="entry name" value="Emycin-R_leader_pep2"/>
</dbReference>
<dbReference type="Pfam" id="PF08057">
    <property type="entry name" value="Ery_res_leader2"/>
    <property type="match status" value="1"/>
</dbReference>
<protein>
    <recommendedName>
        <fullName>Erythromycin resistance leader peptide</fullName>
    </recommendedName>
    <alternativeName>
        <fullName>23S rRNA methylase leader peptide</fullName>
    </alternativeName>
</protein>
<keyword id="KW-0046">Antibiotic resistance</keyword>
<keyword id="KW-0428">Leader peptide</keyword>
<name>LPER_BACLI</name>